<evidence type="ECO:0000250" key="1"/>
<evidence type="ECO:0000250" key="2">
    <source>
        <dbReference type="UniProtKB" id="O23507"/>
    </source>
</evidence>
<evidence type="ECO:0000255" key="3"/>
<evidence type="ECO:0000255" key="4">
    <source>
        <dbReference type="PROSITE-ProRule" id="PRU00498"/>
    </source>
</evidence>
<evidence type="ECO:0000255" key="5">
    <source>
        <dbReference type="PROSITE-ProRule" id="PRU10095"/>
    </source>
</evidence>
<evidence type="ECO:0000269" key="6">
    <source>
    </source>
</evidence>
<evidence type="ECO:0000305" key="7"/>
<keyword id="KW-0903">Direct protein sequencing</keyword>
<keyword id="KW-0325">Glycoprotein</keyword>
<keyword id="KW-0378">Hydrolase</keyword>
<keyword id="KW-0479">Metal-binding</keyword>
<keyword id="KW-0482">Metalloprotease</keyword>
<keyword id="KW-0645">Protease</keyword>
<keyword id="KW-1185">Reference proteome</keyword>
<keyword id="KW-0732">Signal</keyword>
<keyword id="KW-0862">Zinc</keyword>
<keyword id="KW-0865">Zymogen</keyword>
<proteinExistence type="evidence at protein level"/>
<dbReference type="EC" id="3.4.24.-"/>
<dbReference type="EMBL" id="U63725">
    <property type="protein sequence ID" value="AAB26959.1"/>
    <property type="molecule type" value="mRNA"/>
</dbReference>
<dbReference type="PIR" id="T08836">
    <property type="entry name" value="T08836"/>
</dbReference>
<dbReference type="RefSeq" id="NP_001235535.1">
    <property type="nucleotide sequence ID" value="NM_001248606.1"/>
</dbReference>
<dbReference type="SMR" id="P29136"/>
<dbReference type="STRING" id="3847.P29136"/>
<dbReference type="MEROPS" id="M10.012"/>
<dbReference type="PaxDb" id="3847-GLYMA02G37990.1"/>
<dbReference type="GeneID" id="547880"/>
<dbReference type="KEGG" id="gmx:547880"/>
<dbReference type="eggNOG" id="KOG1565">
    <property type="taxonomic scope" value="Eukaryota"/>
</dbReference>
<dbReference type="InParanoid" id="P29136"/>
<dbReference type="OrthoDB" id="406838at2759"/>
<dbReference type="Proteomes" id="UP000008827">
    <property type="component" value="Unplaced"/>
</dbReference>
<dbReference type="GO" id="GO:0031012">
    <property type="term" value="C:extracellular matrix"/>
    <property type="evidence" value="ECO:0007669"/>
    <property type="project" value="InterPro"/>
</dbReference>
<dbReference type="GO" id="GO:0004222">
    <property type="term" value="F:metalloendopeptidase activity"/>
    <property type="evidence" value="ECO:0000318"/>
    <property type="project" value="GO_Central"/>
</dbReference>
<dbReference type="GO" id="GO:0008270">
    <property type="term" value="F:zinc ion binding"/>
    <property type="evidence" value="ECO:0007669"/>
    <property type="project" value="InterPro"/>
</dbReference>
<dbReference type="GO" id="GO:0030574">
    <property type="term" value="P:collagen catabolic process"/>
    <property type="evidence" value="ECO:0000318"/>
    <property type="project" value="GO_Central"/>
</dbReference>
<dbReference type="GO" id="GO:0030198">
    <property type="term" value="P:extracellular matrix organization"/>
    <property type="evidence" value="ECO:0000318"/>
    <property type="project" value="GO_Central"/>
</dbReference>
<dbReference type="GO" id="GO:0006508">
    <property type="term" value="P:proteolysis"/>
    <property type="evidence" value="ECO:0007669"/>
    <property type="project" value="UniProtKB-KW"/>
</dbReference>
<dbReference type="CDD" id="cd04278">
    <property type="entry name" value="ZnMc_MMP"/>
    <property type="match status" value="1"/>
</dbReference>
<dbReference type="FunFam" id="3.40.390.10:FF:000018">
    <property type="entry name" value="Metalloendoproteinase 1"/>
    <property type="match status" value="1"/>
</dbReference>
<dbReference type="Gene3D" id="3.40.390.10">
    <property type="entry name" value="Collagenase (Catalytic Domain)"/>
    <property type="match status" value="1"/>
</dbReference>
<dbReference type="InterPro" id="IPR033739">
    <property type="entry name" value="M10A_MMP"/>
</dbReference>
<dbReference type="InterPro" id="IPR024079">
    <property type="entry name" value="MetalloPept_cat_dom_sf"/>
</dbReference>
<dbReference type="InterPro" id="IPR001818">
    <property type="entry name" value="Pept_M10_metallopeptidase"/>
</dbReference>
<dbReference type="InterPro" id="IPR021190">
    <property type="entry name" value="Pept_M10A"/>
</dbReference>
<dbReference type="InterPro" id="IPR021158">
    <property type="entry name" value="Pept_M10A_Zn_BS"/>
</dbReference>
<dbReference type="InterPro" id="IPR006026">
    <property type="entry name" value="Peptidase_Metallo"/>
</dbReference>
<dbReference type="InterPro" id="IPR002477">
    <property type="entry name" value="Peptidoglycan-bd-like"/>
</dbReference>
<dbReference type="InterPro" id="IPR036365">
    <property type="entry name" value="PGBD-like_sf"/>
</dbReference>
<dbReference type="PANTHER" id="PTHR10201">
    <property type="entry name" value="MATRIX METALLOPROTEINASE"/>
    <property type="match status" value="1"/>
</dbReference>
<dbReference type="PANTHER" id="PTHR10201:SF260">
    <property type="entry name" value="METALLOENDOPROTEINASE 1"/>
    <property type="match status" value="1"/>
</dbReference>
<dbReference type="Pfam" id="PF00413">
    <property type="entry name" value="Peptidase_M10"/>
    <property type="match status" value="1"/>
</dbReference>
<dbReference type="Pfam" id="PF01471">
    <property type="entry name" value="PG_binding_1"/>
    <property type="match status" value="1"/>
</dbReference>
<dbReference type="PRINTS" id="PR00138">
    <property type="entry name" value="MATRIXIN"/>
</dbReference>
<dbReference type="SMART" id="SM00235">
    <property type="entry name" value="ZnMc"/>
    <property type="match status" value="1"/>
</dbReference>
<dbReference type="SUPFAM" id="SSF55486">
    <property type="entry name" value="Metalloproteases ('zincins'), catalytic domain"/>
    <property type="match status" value="1"/>
</dbReference>
<dbReference type="SUPFAM" id="SSF47090">
    <property type="entry name" value="PGBD-like"/>
    <property type="match status" value="1"/>
</dbReference>
<dbReference type="PROSITE" id="PS00546">
    <property type="entry name" value="CYSTEINE_SWITCH"/>
    <property type="match status" value="1"/>
</dbReference>
<dbReference type="PROSITE" id="PS00142">
    <property type="entry name" value="ZINC_PROTEASE"/>
    <property type="match status" value="1"/>
</dbReference>
<name>MEP1_SOYBN</name>
<organism>
    <name type="scientific">Glycine max</name>
    <name type="common">Soybean</name>
    <name type="synonym">Glycine hispida</name>
    <dbReference type="NCBI Taxonomy" id="3847"/>
    <lineage>
        <taxon>Eukaryota</taxon>
        <taxon>Viridiplantae</taxon>
        <taxon>Streptophyta</taxon>
        <taxon>Embryophyta</taxon>
        <taxon>Tracheophyta</taxon>
        <taxon>Spermatophyta</taxon>
        <taxon>Magnoliopsida</taxon>
        <taxon>eudicotyledons</taxon>
        <taxon>Gunneridae</taxon>
        <taxon>Pentapetalae</taxon>
        <taxon>rosids</taxon>
        <taxon>fabids</taxon>
        <taxon>Fabales</taxon>
        <taxon>Fabaceae</taxon>
        <taxon>Papilionoideae</taxon>
        <taxon>50 kb inversion clade</taxon>
        <taxon>NPAAA clade</taxon>
        <taxon>indigoferoid/millettioid clade</taxon>
        <taxon>Phaseoleae</taxon>
        <taxon>Glycine</taxon>
        <taxon>Glycine subgen. Soja</taxon>
    </lineage>
</organism>
<reference key="1">
    <citation type="journal article" date="1997" name="FEBS Lett.">
        <title>Construction and characterization of the soybean leaf metalloproteinase cDNA.</title>
        <authorList>
            <person name="Pak J.H."/>
            <person name="Liu C.Y."/>
            <person name="Huangpu J."/>
            <person name="Graham J.S."/>
        </authorList>
    </citation>
    <scope>NUCLEOTIDE SEQUENCE [MRNA]</scope>
    <source>
        <strain>cv. Williams 82</strain>
        <tissue>Leaf</tissue>
    </source>
</reference>
<reference key="2">
    <citation type="journal article" date="1992" name="Plant Physiol.">
        <title>Sequencing and characterization of the soybean leaf metalloproteinase.</title>
        <authorList>
            <person name="McGeehan G."/>
            <person name="Burkhart W."/>
            <person name="Anderegg R."/>
            <person name="Becherer D.J."/>
            <person name="Gillikin J.W."/>
            <person name="Graham J.S."/>
        </authorList>
    </citation>
    <scope>PROTEIN SEQUENCE OF 134-305</scope>
    <source>
        <strain>cv. Williams 82</strain>
        <tissue>Leaf</tissue>
    </source>
</reference>
<accession>P29136</accession>
<sequence length="305" mass="34044">MTLRNHQELLVALATLYFLATSLPSVSAHGPYAWDGEATYKFTTYHPGQNYKGLSNVKNYFHHLGYIPNAPHFDDNFDDTLVSAIKTYQKNYNLNVTGKFDINTLKQIMTPRCGVPDIIINTNKTTSFGMISDYTFFKDMPRWQAGTTQLTYAFSPEPRLDDTFKSAIARAFSKWTPVVNIAFQETTSYETANIKILFASKNHGDPYPFDGPGGILGHAFAPTDGRCHFDADEYWVASGDVTKSPVTSAFDLESVAVHEIGHLLGLGHSSDLRAIMYPSIPPRTRKVNLAQDDIDGIRKLYGINP</sequence>
<protein>
    <recommendedName>
        <fullName>Metalloendoproteinase 1</fullName>
        <ecNumber>3.4.24.-</ecNumber>
    </recommendedName>
    <alternativeName>
        <fullName>SMEP1</fullName>
    </alternativeName>
</protein>
<feature type="signal peptide" evidence="3">
    <location>
        <begin position="1"/>
        <end position="28"/>
    </location>
</feature>
<feature type="propeptide" id="PRO_0000028867" description="Activation peptide" evidence="6">
    <location>
        <begin position="29"/>
        <end position="133"/>
    </location>
</feature>
<feature type="chain" id="PRO_0000028868" description="Metalloendoproteinase 1">
    <location>
        <begin position="134"/>
        <end position="305"/>
    </location>
</feature>
<feature type="short sequence motif" description="Cysteine switch" evidence="1">
    <location>
        <begin position="111"/>
        <end position="118"/>
    </location>
</feature>
<feature type="active site" evidence="5">
    <location>
        <position position="259"/>
    </location>
</feature>
<feature type="binding site" description="in inhibited form" evidence="1">
    <location>
        <position position="113"/>
    </location>
    <ligand>
        <name>Zn(2+)</name>
        <dbReference type="ChEBI" id="CHEBI:29105"/>
        <note>catalytic</note>
    </ligand>
</feature>
<feature type="binding site" evidence="5">
    <location>
        <position position="258"/>
    </location>
    <ligand>
        <name>Zn(2+)</name>
        <dbReference type="ChEBI" id="CHEBI:29105"/>
        <note>catalytic</note>
    </ligand>
</feature>
<feature type="binding site" evidence="5">
    <location>
        <position position="262"/>
    </location>
    <ligand>
        <name>Zn(2+)</name>
        <dbReference type="ChEBI" id="CHEBI:29105"/>
        <note>catalytic</note>
    </ligand>
</feature>
<feature type="binding site" evidence="5">
    <location>
        <position position="268"/>
    </location>
    <ligand>
        <name>Zn(2+)</name>
        <dbReference type="ChEBI" id="CHEBI:29105"/>
        <note>catalytic</note>
    </ligand>
</feature>
<feature type="glycosylation site" description="N-linked (GlcNAc...) asparagine" evidence="4">
    <location>
        <position position="95"/>
    </location>
</feature>
<feature type="glycosylation site" description="N-linked (GlcNAc...) asparagine" evidence="4">
    <location>
        <position position="123"/>
    </location>
</feature>
<comment type="function">
    <text evidence="2">Matrix metalloproteinases (MMPs) or matrixins may play a role in the degradation and remodeling of the extracellular matrix (ECM) during development or in response to stresses.</text>
</comment>
<comment type="cofactor">
    <cofactor evidence="1">
        <name>Zn(2+)</name>
        <dbReference type="ChEBI" id="CHEBI:29105"/>
    </cofactor>
    <text evidence="1">Binds 1 zinc ion per subunit.</text>
</comment>
<comment type="domain">
    <text>The conserved cysteine present in the cysteine-switch motif binds the catalytic zinc ion, thus inhibiting the enzyme. The dissociation of the cysteine from the zinc ion upon the activation-peptide release activates the enzyme.</text>
</comment>
<comment type="similarity">
    <text evidence="7">Belongs to the peptidase M10A family. Matrix metalloproteinases (MMPs) subfamily.</text>
</comment>